<feature type="chain" id="PRO_0000167962" description="Small ribosomal subunit protein bS20">
    <location>
        <begin position="1"/>
        <end position="90"/>
    </location>
</feature>
<evidence type="ECO:0000255" key="1">
    <source>
        <dbReference type="HAMAP-Rule" id="MF_00500"/>
    </source>
</evidence>
<evidence type="ECO:0000305" key="2"/>
<protein>
    <recommendedName>
        <fullName evidence="1">Small ribosomal subunit protein bS20</fullName>
    </recommendedName>
    <alternativeName>
        <fullName evidence="2">30S ribosomal protein S20</fullName>
    </alternativeName>
</protein>
<sequence>MANSKQAKKRIIQAERNRQHNVARRSMMRTFLKKTAYAIEKGDVEAAKENFAKVVPILDKYASKGLIHKNKAARHKSRLSAKIKALATAA</sequence>
<organism>
    <name type="scientific">Francisella tularensis subsp. tularensis (strain SCHU S4 / Schu 4)</name>
    <dbReference type="NCBI Taxonomy" id="177416"/>
    <lineage>
        <taxon>Bacteria</taxon>
        <taxon>Pseudomonadati</taxon>
        <taxon>Pseudomonadota</taxon>
        <taxon>Gammaproteobacteria</taxon>
        <taxon>Thiotrichales</taxon>
        <taxon>Francisellaceae</taxon>
        <taxon>Francisella</taxon>
    </lineage>
</organism>
<gene>
    <name evidence="1" type="primary">rpsT</name>
    <name type="ordered locus">FTT_1679</name>
</gene>
<name>RS20_FRATT</name>
<keyword id="KW-1185">Reference proteome</keyword>
<keyword id="KW-0687">Ribonucleoprotein</keyword>
<keyword id="KW-0689">Ribosomal protein</keyword>
<keyword id="KW-0694">RNA-binding</keyword>
<keyword id="KW-0699">rRNA-binding</keyword>
<proteinExistence type="inferred from homology"/>
<comment type="function">
    <text evidence="1">Binds directly to 16S ribosomal RNA.</text>
</comment>
<comment type="similarity">
    <text evidence="1">Belongs to the bacterial ribosomal protein bS20 family.</text>
</comment>
<accession>Q5NEF7</accession>
<reference key="1">
    <citation type="journal article" date="2005" name="Nat. Genet.">
        <title>The complete genome sequence of Francisella tularensis, the causative agent of tularemia.</title>
        <authorList>
            <person name="Larsson P."/>
            <person name="Oyston P.C.F."/>
            <person name="Chain P."/>
            <person name="Chu M.C."/>
            <person name="Duffield M."/>
            <person name="Fuxelius H.-H."/>
            <person name="Garcia E."/>
            <person name="Haelltorp G."/>
            <person name="Johansson D."/>
            <person name="Isherwood K.E."/>
            <person name="Karp P.D."/>
            <person name="Larsson E."/>
            <person name="Liu Y."/>
            <person name="Michell S."/>
            <person name="Prior J."/>
            <person name="Prior R."/>
            <person name="Malfatti S."/>
            <person name="Sjoestedt A."/>
            <person name="Svensson K."/>
            <person name="Thompson N."/>
            <person name="Vergez L."/>
            <person name="Wagg J.K."/>
            <person name="Wren B.W."/>
            <person name="Lindler L.E."/>
            <person name="Andersson S.G.E."/>
            <person name="Forsman M."/>
            <person name="Titball R.W."/>
        </authorList>
    </citation>
    <scope>NUCLEOTIDE SEQUENCE [LARGE SCALE GENOMIC DNA]</scope>
    <source>
        <strain>SCHU S4 / Schu 4</strain>
    </source>
</reference>
<dbReference type="EMBL" id="AJ749949">
    <property type="protein sequence ID" value="CAG46312.1"/>
    <property type="molecule type" value="Genomic_DNA"/>
</dbReference>
<dbReference type="RefSeq" id="WP_003017608.1">
    <property type="nucleotide sequence ID" value="NZ_CP010290.1"/>
</dbReference>
<dbReference type="RefSeq" id="YP_170585.1">
    <property type="nucleotide sequence ID" value="NC_006570.2"/>
</dbReference>
<dbReference type="SMR" id="Q5NEF7"/>
<dbReference type="STRING" id="177416.FTT_1679"/>
<dbReference type="DNASU" id="3192339"/>
<dbReference type="EnsemblBacteria" id="CAG46312">
    <property type="protein sequence ID" value="CAG46312"/>
    <property type="gene ID" value="FTT_1679"/>
</dbReference>
<dbReference type="GeneID" id="75264396"/>
<dbReference type="KEGG" id="ftu:FTT_1679"/>
<dbReference type="eggNOG" id="COG0268">
    <property type="taxonomic scope" value="Bacteria"/>
</dbReference>
<dbReference type="OrthoDB" id="9807974at2"/>
<dbReference type="Proteomes" id="UP000001174">
    <property type="component" value="Chromosome"/>
</dbReference>
<dbReference type="GO" id="GO:0005829">
    <property type="term" value="C:cytosol"/>
    <property type="evidence" value="ECO:0007669"/>
    <property type="project" value="TreeGrafter"/>
</dbReference>
<dbReference type="GO" id="GO:0015935">
    <property type="term" value="C:small ribosomal subunit"/>
    <property type="evidence" value="ECO:0007669"/>
    <property type="project" value="TreeGrafter"/>
</dbReference>
<dbReference type="GO" id="GO:0070181">
    <property type="term" value="F:small ribosomal subunit rRNA binding"/>
    <property type="evidence" value="ECO:0007669"/>
    <property type="project" value="TreeGrafter"/>
</dbReference>
<dbReference type="GO" id="GO:0003735">
    <property type="term" value="F:structural constituent of ribosome"/>
    <property type="evidence" value="ECO:0007669"/>
    <property type="project" value="InterPro"/>
</dbReference>
<dbReference type="GO" id="GO:0006412">
    <property type="term" value="P:translation"/>
    <property type="evidence" value="ECO:0007669"/>
    <property type="project" value="UniProtKB-UniRule"/>
</dbReference>
<dbReference type="FunFam" id="1.20.58.110:FF:000001">
    <property type="entry name" value="30S ribosomal protein S20"/>
    <property type="match status" value="1"/>
</dbReference>
<dbReference type="Gene3D" id="1.20.58.110">
    <property type="entry name" value="Ribosomal protein S20"/>
    <property type="match status" value="1"/>
</dbReference>
<dbReference type="HAMAP" id="MF_00500">
    <property type="entry name" value="Ribosomal_bS20"/>
    <property type="match status" value="1"/>
</dbReference>
<dbReference type="InterPro" id="IPR002583">
    <property type="entry name" value="Ribosomal_bS20"/>
</dbReference>
<dbReference type="InterPro" id="IPR036510">
    <property type="entry name" value="Ribosomal_bS20_sf"/>
</dbReference>
<dbReference type="NCBIfam" id="TIGR00029">
    <property type="entry name" value="S20"/>
    <property type="match status" value="1"/>
</dbReference>
<dbReference type="PANTHER" id="PTHR33398">
    <property type="entry name" value="30S RIBOSOMAL PROTEIN S20"/>
    <property type="match status" value="1"/>
</dbReference>
<dbReference type="PANTHER" id="PTHR33398:SF1">
    <property type="entry name" value="SMALL RIBOSOMAL SUBUNIT PROTEIN BS20C"/>
    <property type="match status" value="1"/>
</dbReference>
<dbReference type="Pfam" id="PF01649">
    <property type="entry name" value="Ribosomal_S20p"/>
    <property type="match status" value="1"/>
</dbReference>
<dbReference type="SUPFAM" id="SSF46992">
    <property type="entry name" value="Ribosomal protein S20"/>
    <property type="match status" value="1"/>
</dbReference>